<dbReference type="EMBL" id="AK028768">
    <property type="protein sequence ID" value="BAC26109.1"/>
    <property type="molecule type" value="mRNA"/>
</dbReference>
<dbReference type="EMBL" id="AK030208">
    <property type="protein sequence ID" value="BAC26843.1"/>
    <property type="molecule type" value="mRNA"/>
</dbReference>
<dbReference type="EMBL" id="AK032376">
    <property type="protein sequence ID" value="BAC27844.1"/>
    <property type="molecule type" value="mRNA"/>
</dbReference>
<dbReference type="EMBL" id="AK033867">
    <property type="protein sequence ID" value="BAC28499.1"/>
    <property type="status" value="ALT_SEQ"/>
    <property type="molecule type" value="mRNA"/>
</dbReference>
<dbReference type="EMBL" id="AK051527">
    <property type="protein sequence ID" value="BAC34663.1"/>
    <property type="molecule type" value="mRNA"/>
</dbReference>
<dbReference type="EMBL" id="AK078706">
    <property type="protein sequence ID" value="BAC37365.1"/>
    <property type="status" value="ALT_INIT"/>
    <property type="molecule type" value="mRNA"/>
</dbReference>
<dbReference type="EMBL" id="AK136229">
    <property type="protein sequence ID" value="BAE22885.1"/>
    <property type="status" value="ALT_INIT"/>
    <property type="molecule type" value="mRNA"/>
</dbReference>
<dbReference type="EMBL" id="BC023073">
    <property type="protein sequence ID" value="AAH23073.1"/>
    <property type="molecule type" value="mRNA"/>
</dbReference>
<dbReference type="EMBL" id="BC049909">
    <property type="protein sequence ID" value="AAH49909.1"/>
    <property type="status" value="ALT_INIT"/>
    <property type="molecule type" value="mRNA"/>
</dbReference>
<dbReference type="EMBL" id="BC064100">
    <property type="protein sequence ID" value="AAH64100.1"/>
    <property type="molecule type" value="mRNA"/>
</dbReference>
<dbReference type="EMBL" id="BC094247">
    <property type="protein sequence ID" value="AAH94247.1"/>
    <property type="molecule type" value="mRNA"/>
</dbReference>
<dbReference type="CCDS" id="CCDS23136.1">
    <molecule id="Q8BFU3-1"/>
</dbReference>
<dbReference type="CCDS" id="CCDS80987.1">
    <molecule id="Q8BFU3-5"/>
</dbReference>
<dbReference type="CCDS" id="CCDS80988.1">
    <molecule id="Q8BFU3-2"/>
</dbReference>
<dbReference type="RefSeq" id="NP_001297768.1">
    <molecule id="Q8BFU3-5"/>
    <property type="nucleotide sequence ID" value="NM_001310839.2"/>
</dbReference>
<dbReference type="RefSeq" id="NP_001297769.1">
    <molecule id="Q8BFU3-2"/>
    <property type="nucleotide sequence ID" value="NM_001310840.2"/>
</dbReference>
<dbReference type="RefSeq" id="NP_001348041.1">
    <molecule id="Q8BFU3-1"/>
    <property type="nucleotide sequence ID" value="NM_001361112.1"/>
</dbReference>
<dbReference type="RefSeq" id="NP_001348042.1">
    <molecule id="Q8BFU3-3"/>
    <property type="nucleotide sequence ID" value="NM_001361113.1"/>
</dbReference>
<dbReference type="RefSeq" id="NP_001348043.1">
    <molecule id="Q8BFU3-5"/>
    <property type="nucleotide sequence ID" value="NM_001361114.1"/>
</dbReference>
<dbReference type="RefSeq" id="NP_848824.1">
    <molecule id="Q8BFU3-1"/>
    <property type="nucleotide sequence ID" value="NM_178709.5"/>
</dbReference>
<dbReference type="RefSeq" id="XP_011240801.1">
    <property type="nucleotide sequence ID" value="XM_011242499.2"/>
</dbReference>
<dbReference type="RefSeq" id="XP_011240804.1">
    <property type="nucleotide sequence ID" value="XM_011242502.2"/>
</dbReference>
<dbReference type="RefSeq" id="XP_011240805.1">
    <molecule id="Q8BFU3-2"/>
    <property type="nucleotide sequence ID" value="XM_011242503.3"/>
</dbReference>
<dbReference type="RefSeq" id="XP_017168820.1">
    <property type="nucleotide sequence ID" value="XM_017313331.1"/>
</dbReference>
<dbReference type="RefSeq" id="XP_030100177.1">
    <molecule id="Q8BFU3-3"/>
    <property type="nucleotide sequence ID" value="XM_030244317.2"/>
</dbReference>
<dbReference type="RefSeq" id="XP_030100178.1">
    <molecule id="Q8BFU3-3"/>
    <property type="nucleotide sequence ID" value="XM_030244318.2"/>
</dbReference>
<dbReference type="RefSeq" id="XP_036010782.1">
    <molecule id="Q8BFU3-1"/>
    <property type="nucleotide sequence ID" value="XM_036154889.1"/>
</dbReference>
<dbReference type="RefSeq" id="XP_036010783.1">
    <molecule id="Q8BFU3-1"/>
    <property type="nucleotide sequence ID" value="XM_036154890.1"/>
</dbReference>
<dbReference type="SMR" id="Q8BFU3"/>
<dbReference type="BioGRID" id="231638">
    <property type="interactions" value="3"/>
</dbReference>
<dbReference type="FunCoup" id="Q8BFU3">
    <property type="interactions" value="412"/>
</dbReference>
<dbReference type="IntAct" id="Q8BFU3">
    <property type="interactions" value="1"/>
</dbReference>
<dbReference type="MINT" id="Q8BFU3"/>
<dbReference type="STRING" id="10090.ENSMUSP00000060941"/>
<dbReference type="iPTMnet" id="Q8BFU3"/>
<dbReference type="PhosphoSitePlus" id="Q8BFU3"/>
<dbReference type="SwissPalm" id="Q8BFU3"/>
<dbReference type="PaxDb" id="10090-ENSMUSP00000060941"/>
<dbReference type="PeptideAtlas" id="Q8BFU3"/>
<dbReference type="ProteomicsDB" id="299845">
    <molecule id="Q8BFU3-1"/>
</dbReference>
<dbReference type="ProteomicsDB" id="299846">
    <molecule id="Q8BFU3-2"/>
</dbReference>
<dbReference type="ProteomicsDB" id="299847">
    <molecule id="Q8BFU3-3"/>
</dbReference>
<dbReference type="ProteomicsDB" id="299848">
    <molecule id="Q8BFU3-4"/>
</dbReference>
<dbReference type="ProteomicsDB" id="299849">
    <molecule id="Q8BFU3-5"/>
</dbReference>
<dbReference type="Pumba" id="Q8BFU3"/>
<dbReference type="Antibodypedia" id="32345">
    <property type="antibodies" value="36 antibodies from 15 providers"/>
</dbReference>
<dbReference type="DNASU" id="235315"/>
<dbReference type="Ensembl" id="ENSMUST00000058720.13">
    <molecule id="Q8BFU3-1"/>
    <property type="protein sequence ID" value="ENSMUSP00000060941.6"/>
    <property type="gene ID" value="ENSMUSG00000042790.17"/>
</dbReference>
<dbReference type="Ensembl" id="ENSMUST00000160699.9">
    <molecule id="Q8BFU3-1"/>
    <property type="protein sequence ID" value="ENSMUSP00000123754.2"/>
    <property type="gene ID" value="ENSMUSG00000042790.17"/>
</dbReference>
<dbReference type="Ensembl" id="ENSMUST00000161187.8">
    <molecule id="Q8BFU3-5"/>
    <property type="protein sequence ID" value="ENSMUSP00000124296.2"/>
    <property type="gene ID" value="ENSMUSG00000042790.17"/>
</dbReference>
<dbReference type="Ensembl" id="ENSMUST00000161203.8">
    <molecule id="Q8BFU3-2"/>
    <property type="protein sequence ID" value="ENSMUSP00000123995.2"/>
    <property type="gene ID" value="ENSMUSG00000042790.17"/>
</dbReference>
<dbReference type="Ensembl" id="ENSMUST00000162369.8">
    <molecule id="Q8BFU3-4"/>
    <property type="protein sequence ID" value="ENSMUSP00000149889.2"/>
    <property type="gene ID" value="ENSMUSG00000042790.17"/>
</dbReference>
<dbReference type="GeneID" id="235315"/>
<dbReference type="KEGG" id="mmu:235315"/>
<dbReference type="UCSC" id="uc009pgk.1">
    <molecule id="Q8BFU3-1"/>
    <property type="organism name" value="mouse"/>
</dbReference>
<dbReference type="UCSC" id="uc009pgl.1">
    <molecule id="Q8BFU3-5"/>
    <property type="organism name" value="mouse"/>
</dbReference>
<dbReference type="UCSC" id="uc009pgm.1">
    <molecule id="Q8BFU3-2"/>
    <property type="organism name" value="mouse"/>
</dbReference>
<dbReference type="AGR" id="MGI:2444451"/>
<dbReference type="CTD" id="257160"/>
<dbReference type="MGI" id="MGI:2444451">
    <property type="gene designation" value="Rnf214"/>
</dbReference>
<dbReference type="VEuPathDB" id="HostDB:ENSMUSG00000042790"/>
<dbReference type="eggNOG" id="ENOG502QTPR">
    <property type="taxonomic scope" value="Eukaryota"/>
</dbReference>
<dbReference type="GeneTree" id="ENSGT00940000159470"/>
<dbReference type="HOGENOM" id="CLU_019742_1_0_1"/>
<dbReference type="InParanoid" id="Q8BFU3"/>
<dbReference type="OMA" id="AGMEPGW"/>
<dbReference type="PhylomeDB" id="Q8BFU3"/>
<dbReference type="TreeFam" id="TF333981"/>
<dbReference type="BioGRID-ORCS" id="235315">
    <property type="hits" value="4 hits in 78 CRISPR screens"/>
</dbReference>
<dbReference type="ChiTaRS" id="Rnf214">
    <property type="organism name" value="mouse"/>
</dbReference>
<dbReference type="PRO" id="PR:Q8BFU3"/>
<dbReference type="Proteomes" id="UP000000589">
    <property type="component" value="Chromosome 9"/>
</dbReference>
<dbReference type="RNAct" id="Q8BFU3">
    <property type="molecule type" value="protein"/>
</dbReference>
<dbReference type="Bgee" id="ENSMUSG00000042790">
    <property type="expression patterns" value="Expressed in retinal neural layer and 248 other cell types or tissues"/>
</dbReference>
<dbReference type="ExpressionAtlas" id="Q8BFU3">
    <property type="expression patterns" value="baseline and differential"/>
</dbReference>
<dbReference type="GO" id="GO:0008270">
    <property type="term" value="F:zinc ion binding"/>
    <property type="evidence" value="ECO:0007669"/>
    <property type="project" value="UniProtKB-KW"/>
</dbReference>
<dbReference type="CDD" id="cd16477">
    <property type="entry name" value="RING-H2_RNF214"/>
    <property type="match status" value="1"/>
</dbReference>
<dbReference type="Gene3D" id="3.30.40.10">
    <property type="entry name" value="Zinc/RING finger domain, C3HC4 (zinc finger)"/>
    <property type="match status" value="1"/>
</dbReference>
<dbReference type="InterPro" id="IPR056872">
    <property type="entry name" value="TTC3/DZIP3-like_helical"/>
</dbReference>
<dbReference type="InterPro" id="IPR056870">
    <property type="entry name" value="TTC3/DZIP3/RBM44-like_helical"/>
</dbReference>
<dbReference type="InterPro" id="IPR001841">
    <property type="entry name" value="Znf_RING"/>
</dbReference>
<dbReference type="InterPro" id="IPR013083">
    <property type="entry name" value="Znf_RING/FYVE/PHD"/>
</dbReference>
<dbReference type="PANTHER" id="PTHR15727">
    <property type="entry name" value="RING FINGER PROTEIN 214"/>
    <property type="match status" value="1"/>
</dbReference>
<dbReference type="PANTHER" id="PTHR15727:SF3">
    <property type="entry name" value="RING FINGER PROTEIN 214"/>
    <property type="match status" value="1"/>
</dbReference>
<dbReference type="Pfam" id="PF24525">
    <property type="entry name" value="TTC3"/>
    <property type="match status" value="1"/>
</dbReference>
<dbReference type="Pfam" id="PF24905">
    <property type="entry name" value="TTC3_9th"/>
    <property type="match status" value="1"/>
</dbReference>
<dbReference type="SUPFAM" id="SSF57850">
    <property type="entry name" value="RING/U-box"/>
    <property type="match status" value="1"/>
</dbReference>
<dbReference type="PROSITE" id="PS50089">
    <property type="entry name" value="ZF_RING_2"/>
    <property type="match status" value="1"/>
</dbReference>
<protein>
    <recommendedName>
        <fullName>RING finger protein 214</fullName>
    </recommendedName>
</protein>
<reference key="1">
    <citation type="journal article" date="2005" name="Science">
        <title>The transcriptional landscape of the mammalian genome.</title>
        <authorList>
            <person name="Carninci P."/>
            <person name="Kasukawa T."/>
            <person name="Katayama S."/>
            <person name="Gough J."/>
            <person name="Frith M.C."/>
            <person name="Maeda N."/>
            <person name="Oyama R."/>
            <person name="Ravasi T."/>
            <person name="Lenhard B."/>
            <person name="Wells C."/>
            <person name="Kodzius R."/>
            <person name="Shimokawa K."/>
            <person name="Bajic V.B."/>
            <person name="Brenner S.E."/>
            <person name="Batalov S."/>
            <person name="Forrest A.R."/>
            <person name="Zavolan M."/>
            <person name="Davis M.J."/>
            <person name="Wilming L.G."/>
            <person name="Aidinis V."/>
            <person name="Allen J.E."/>
            <person name="Ambesi-Impiombato A."/>
            <person name="Apweiler R."/>
            <person name="Aturaliya R.N."/>
            <person name="Bailey T.L."/>
            <person name="Bansal M."/>
            <person name="Baxter L."/>
            <person name="Beisel K.W."/>
            <person name="Bersano T."/>
            <person name="Bono H."/>
            <person name="Chalk A.M."/>
            <person name="Chiu K.P."/>
            <person name="Choudhary V."/>
            <person name="Christoffels A."/>
            <person name="Clutterbuck D.R."/>
            <person name="Crowe M.L."/>
            <person name="Dalla E."/>
            <person name="Dalrymple B.P."/>
            <person name="de Bono B."/>
            <person name="Della Gatta G."/>
            <person name="di Bernardo D."/>
            <person name="Down T."/>
            <person name="Engstrom P."/>
            <person name="Fagiolini M."/>
            <person name="Faulkner G."/>
            <person name="Fletcher C.F."/>
            <person name="Fukushima T."/>
            <person name="Furuno M."/>
            <person name="Futaki S."/>
            <person name="Gariboldi M."/>
            <person name="Georgii-Hemming P."/>
            <person name="Gingeras T.R."/>
            <person name="Gojobori T."/>
            <person name="Green R.E."/>
            <person name="Gustincich S."/>
            <person name="Harbers M."/>
            <person name="Hayashi Y."/>
            <person name="Hensch T.K."/>
            <person name="Hirokawa N."/>
            <person name="Hill D."/>
            <person name="Huminiecki L."/>
            <person name="Iacono M."/>
            <person name="Ikeo K."/>
            <person name="Iwama A."/>
            <person name="Ishikawa T."/>
            <person name="Jakt M."/>
            <person name="Kanapin A."/>
            <person name="Katoh M."/>
            <person name="Kawasawa Y."/>
            <person name="Kelso J."/>
            <person name="Kitamura H."/>
            <person name="Kitano H."/>
            <person name="Kollias G."/>
            <person name="Krishnan S.P."/>
            <person name="Kruger A."/>
            <person name="Kummerfeld S.K."/>
            <person name="Kurochkin I.V."/>
            <person name="Lareau L.F."/>
            <person name="Lazarevic D."/>
            <person name="Lipovich L."/>
            <person name="Liu J."/>
            <person name="Liuni S."/>
            <person name="McWilliam S."/>
            <person name="Madan Babu M."/>
            <person name="Madera M."/>
            <person name="Marchionni L."/>
            <person name="Matsuda H."/>
            <person name="Matsuzawa S."/>
            <person name="Miki H."/>
            <person name="Mignone F."/>
            <person name="Miyake S."/>
            <person name="Morris K."/>
            <person name="Mottagui-Tabar S."/>
            <person name="Mulder N."/>
            <person name="Nakano N."/>
            <person name="Nakauchi H."/>
            <person name="Ng P."/>
            <person name="Nilsson R."/>
            <person name="Nishiguchi S."/>
            <person name="Nishikawa S."/>
            <person name="Nori F."/>
            <person name="Ohara O."/>
            <person name="Okazaki Y."/>
            <person name="Orlando V."/>
            <person name="Pang K.C."/>
            <person name="Pavan W.J."/>
            <person name="Pavesi G."/>
            <person name="Pesole G."/>
            <person name="Petrovsky N."/>
            <person name="Piazza S."/>
            <person name="Reed J."/>
            <person name="Reid J.F."/>
            <person name="Ring B.Z."/>
            <person name="Ringwald M."/>
            <person name="Rost B."/>
            <person name="Ruan Y."/>
            <person name="Salzberg S.L."/>
            <person name="Sandelin A."/>
            <person name="Schneider C."/>
            <person name="Schoenbach C."/>
            <person name="Sekiguchi K."/>
            <person name="Semple C.A."/>
            <person name="Seno S."/>
            <person name="Sessa L."/>
            <person name="Sheng Y."/>
            <person name="Shibata Y."/>
            <person name="Shimada H."/>
            <person name="Shimada K."/>
            <person name="Silva D."/>
            <person name="Sinclair B."/>
            <person name="Sperling S."/>
            <person name="Stupka E."/>
            <person name="Sugiura K."/>
            <person name="Sultana R."/>
            <person name="Takenaka Y."/>
            <person name="Taki K."/>
            <person name="Tammoja K."/>
            <person name="Tan S.L."/>
            <person name="Tang S."/>
            <person name="Taylor M.S."/>
            <person name="Tegner J."/>
            <person name="Teichmann S.A."/>
            <person name="Ueda H.R."/>
            <person name="van Nimwegen E."/>
            <person name="Verardo R."/>
            <person name="Wei C.L."/>
            <person name="Yagi K."/>
            <person name="Yamanishi H."/>
            <person name="Zabarovsky E."/>
            <person name="Zhu S."/>
            <person name="Zimmer A."/>
            <person name="Hide W."/>
            <person name="Bult C."/>
            <person name="Grimmond S.M."/>
            <person name="Teasdale R.D."/>
            <person name="Liu E.T."/>
            <person name="Brusic V."/>
            <person name="Quackenbush J."/>
            <person name="Wahlestedt C."/>
            <person name="Mattick J.S."/>
            <person name="Hume D.A."/>
            <person name="Kai C."/>
            <person name="Sasaki D."/>
            <person name="Tomaru Y."/>
            <person name="Fukuda S."/>
            <person name="Kanamori-Katayama M."/>
            <person name="Suzuki M."/>
            <person name="Aoki J."/>
            <person name="Arakawa T."/>
            <person name="Iida J."/>
            <person name="Imamura K."/>
            <person name="Itoh M."/>
            <person name="Kato T."/>
            <person name="Kawaji H."/>
            <person name="Kawagashira N."/>
            <person name="Kawashima T."/>
            <person name="Kojima M."/>
            <person name="Kondo S."/>
            <person name="Konno H."/>
            <person name="Nakano K."/>
            <person name="Ninomiya N."/>
            <person name="Nishio T."/>
            <person name="Okada M."/>
            <person name="Plessy C."/>
            <person name="Shibata K."/>
            <person name="Shiraki T."/>
            <person name="Suzuki S."/>
            <person name="Tagami M."/>
            <person name="Waki K."/>
            <person name="Watahiki A."/>
            <person name="Okamura-Oho Y."/>
            <person name="Suzuki H."/>
            <person name="Kawai J."/>
            <person name="Hayashizaki Y."/>
        </authorList>
    </citation>
    <scope>NUCLEOTIDE SEQUENCE [LARGE SCALE MRNA] (ISOFORMS 1; 2; 3; 4 AND 5)</scope>
    <source>
        <strain>C57BL/6J</strain>
        <tissue>Diencephalon</tissue>
        <tissue>Egg</tissue>
        <tissue>Eye</tissue>
        <tissue>Olfactory bulb</tissue>
        <tissue>Skin</tissue>
        <tissue>Spinal ganglion</tissue>
        <tissue>Testis</tissue>
    </source>
</reference>
<reference key="2">
    <citation type="journal article" date="2004" name="Genome Res.">
        <title>The status, quality, and expansion of the NIH full-length cDNA project: the Mammalian Gene Collection (MGC).</title>
        <authorList>
            <consortium name="The MGC Project Team"/>
        </authorList>
    </citation>
    <scope>NUCLEOTIDE SEQUENCE [LARGE SCALE MRNA] (ISOFORMS 1 AND 2)</scope>
    <source>
        <strain>C57BL/6J</strain>
        <strain>FVB/N</strain>
        <strain>FVB/N-3</strain>
        <tissue>Brain</tissue>
        <tissue>Mammary gland</tissue>
        <tissue>Mammary tumor</tissue>
    </source>
</reference>
<reference key="3">
    <citation type="journal article" date="2010" name="Cell">
        <title>A tissue-specific atlas of mouse protein phosphorylation and expression.</title>
        <authorList>
            <person name="Huttlin E.L."/>
            <person name="Jedrychowski M.P."/>
            <person name="Elias J.E."/>
            <person name="Goswami T."/>
            <person name="Rad R."/>
            <person name="Beausoleil S.A."/>
            <person name="Villen J."/>
            <person name="Haas W."/>
            <person name="Sowa M.E."/>
            <person name="Gygi S.P."/>
        </authorList>
    </citation>
    <scope>PHOSPHORYLATION [LARGE SCALE ANALYSIS] AT SER-48; SER-196 AND SER-511</scope>
    <scope>IDENTIFICATION BY MASS SPECTROMETRY [LARGE SCALE ANALYSIS]</scope>
    <source>
        <tissue>Brain</tissue>
        <tissue>Heart</tissue>
        <tissue>Kidney</tissue>
        <tissue>Lung</tissue>
        <tissue>Pancreas</tissue>
        <tissue>Spleen</tissue>
        <tissue>Testis</tissue>
    </source>
</reference>
<organism>
    <name type="scientific">Mus musculus</name>
    <name type="common">Mouse</name>
    <dbReference type="NCBI Taxonomy" id="10090"/>
    <lineage>
        <taxon>Eukaryota</taxon>
        <taxon>Metazoa</taxon>
        <taxon>Chordata</taxon>
        <taxon>Craniata</taxon>
        <taxon>Vertebrata</taxon>
        <taxon>Euteleostomi</taxon>
        <taxon>Mammalia</taxon>
        <taxon>Eutheria</taxon>
        <taxon>Euarchontoglires</taxon>
        <taxon>Glires</taxon>
        <taxon>Rodentia</taxon>
        <taxon>Myomorpha</taxon>
        <taxon>Muroidea</taxon>
        <taxon>Muridae</taxon>
        <taxon>Murinae</taxon>
        <taxon>Mus</taxon>
        <taxon>Mus</taxon>
    </lineage>
</organism>
<sequence>MAASEVAGLGAGTPSPSESSALCASKSDESLPDGLSPKDSAQKQKNLSPPSVSSQMITKESNRNAHLEHPEQNPGSSVGDTSAAHEEVVGENLVATALCLSGNGSQSDLKDLTNPAGEEGDTSLRESLHPVTRSLKAGCHSKQLASGNCSEEKCPAASVLKEGSRDAGLDLLPVVPPANGVEGVRVDQDDDQDSSSLKLSQNIAVQTDFKTADSEVNTDQDIEKNLDKMMTERTLLKERYQEVLDKQRQVESQLQVQLKQLQQRREEEMKNHQEILKAIQDVTIKREETKKKIEKEKKEFLQKEQDLKAEIEKLCEKGRREVWEMELDRLKNQDGEINRNIMEETERAWKAEILSLESRKELLVLKLEEAEKEAELHLTYLKSTPPTLETVRSKQEWETRLNGVRIMKKNVRDQFNSHIQLVRNGAKLSSLPQIPTPTLPPPPSEADFMLQVFQPSPSLTPRMPFSIGQVTMPMVMPSADPRSLSFPILNPALSQSSQPSPPLPGSHGRNSPGLGSLVSPHGPHMPPAASIPPPPGLGGIKASSETPRPQPVDKLEKILEKLLTRFPQCNKAQMTNILQQIKTARTTMAGLTMEELIQLVAARLAEHERVASSTQAPPTCKLCLMCQKLVQPSELHPMACTHALHKECIKFWAQTNTNDTCPFCPTLK</sequence>
<gene>
    <name type="primary">Rnf214</name>
</gene>
<feature type="initiator methionine" description="Removed" evidence="1">
    <location>
        <position position="1"/>
    </location>
</feature>
<feature type="chain" id="PRO_0000280547" description="RING finger protein 214">
    <location>
        <begin position="2"/>
        <end position="668"/>
    </location>
</feature>
<feature type="zinc finger region" description="RING-type; atypical" evidence="3">
    <location>
        <begin position="623"/>
        <end position="665"/>
    </location>
</feature>
<feature type="region of interest" description="Disordered" evidence="4">
    <location>
        <begin position="1"/>
        <end position="87"/>
    </location>
</feature>
<feature type="region of interest" description="Disordered" evidence="4">
    <location>
        <begin position="103"/>
        <end position="125"/>
    </location>
</feature>
<feature type="region of interest" description="Disordered" evidence="4">
    <location>
        <begin position="486"/>
        <end position="552"/>
    </location>
</feature>
<feature type="coiled-coil region" evidence="2">
    <location>
        <begin position="220"/>
        <end position="379"/>
    </location>
</feature>
<feature type="compositionally biased region" description="Polar residues" evidence="4">
    <location>
        <begin position="43"/>
        <end position="59"/>
    </location>
</feature>
<feature type="compositionally biased region" description="Basic and acidic residues" evidence="4">
    <location>
        <begin position="60"/>
        <end position="71"/>
    </location>
</feature>
<feature type="compositionally biased region" description="Pro residues" evidence="4">
    <location>
        <begin position="523"/>
        <end position="536"/>
    </location>
</feature>
<feature type="modified residue" description="N-acetylalanine" evidence="1">
    <location>
        <position position="2"/>
    </location>
</feature>
<feature type="modified residue" description="Phosphoserine" evidence="1">
    <location>
        <position position="15"/>
    </location>
</feature>
<feature type="modified residue" description="Phosphoserine" evidence="1">
    <location>
        <position position="40"/>
    </location>
</feature>
<feature type="modified residue" description="Phosphoserine" evidence="8">
    <location>
        <position position="48"/>
    </location>
</feature>
<feature type="modified residue" description="Phosphoserine" evidence="1">
    <location>
        <position position="54"/>
    </location>
</feature>
<feature type="modified residue" description="Phosphoserine" evidence="8">
    <location>
        <position position="196"/>
    </location>
</feature>
<feature type="modified residue" description="Phosphoserine" evidence="1">
    <location>
        <position position="497"/>
    </location>
</feature>
<feature type="modified residue" description="Phosphoserine" evidence="8">
    <location>
        <position position="511"/>
    </location>
</feature>
<feature type="modified residue" description="Phosphoserine" evidence="1">
    <location>
        <position position="516"/>
    </location>
</feature>
<feature type="splice variant" id="VSP_023773" description="In isoform 3." evidence="6">
    <location>
        <begin position="1"/>
        <end position="55"/>
    </location>
</feature>
<feature type="splice variant" id="VSP_023774" description="In isoform 2 and isoform 5." evidence="5 6">
    <location>
        <begin position="52"/>
        <end position="206"/>
    </location>
</feature>
<feature type="splice variant" id="VSP_023775" description="In isoform 2." evidence="5 6">
    <original>Q</original>
    <variation>QPLGRIRALHPAPLAQISPPMFLPSAQVSYPGRSSH</variation>
    <location>
        <position position="615"/>
    </location>
</feature>
<feature type="splice variant" id="VSP_023776" description="In isoform 4." evidence="6">
    <original>APPTCKLCLMCQKLVQPSELHPMACTHALHKECIKFWAQTNTNDTCPFCPTLK</original>
    <variation>VRGASGRELRPAERLRKKPTRRSGHEEIRARNICSAFLIIRSEFLLPSFLPSFLPSFLPSFLPFFLSFLLVKFICVYVCVCVLCGSRKTTCGSPFSSTM</variation>
    <location>
        <begin position="616"/>
        <end position="668"/>
    </location>
</feature>
<feature type="sequence conflict" description="In Ref. 1; BAE22885." evidence="7" ref="1">
    <original>E</original>
    <variation>K</variation>
    <location>
        <position position="361"/>
    </location>
</feature>
<feature type="sequence conflict" description="In Ref. 1; BAC37365." evidence="7" ref="1">
    <original>P</original>
    <variation>H</variation>
    <location>
        <position position="512"/>
    </location>
</feature>
<feature type="sequence conflict" description="In Ref. 1; BAC37365." evidence="7" ref="1">
    <original>Q</original>
    <variation>H</variation>
    <location>
        <position position="579"/>
    </location>
</feature>
<name>RN214_MOUSE</name>
<keyword id="KW-0007">Acetylation</keyword>
<keyword id="KW-0025">Alternative splicing</keyword>
<keyword id="KW-0175">Coiled coil</keyword>
<keyword id="KW-0479">Metal-binding</keyword>
<keyword id="KW-0597">Phosphoprotein</keyword>
<keyword id="KW-1185">Reference proteome</keyword>
<keyword id="KW-0862">Zinc</keyword>
<keyword id="KW-0863">Zinc-finger</keyword>
<evidence type="ECO:0000250" key="1">
    <source>
        <dbReference type="UniProtKB" id="Q8ND24"/>
    </source>
</evidence>
<evidence type="ECO:0000255" key="2"/>
<evidence type="ECO:0000255" key="3">
    <source>
        <dbReference type="PROSITE-ProRule" id="PRU00175"/>
    </source>
</evidence>
<evidence type="ECO:0000256" key="4">
    <source>
        <dbReference type="SAM" id="MobiDB-lite"/>
    </source>
</evidence>
<evidence type="ECO:0000303" key="5">
    <source>
    </source>
</evidence>
<evidence type="ECO:0000303" key="6">
    <source>
    </source>
</evidence>
<evidence type="ECO:0000305" key="7"/>
<evidence type="ECO:0007744" key="8">
    <source>
    </source>
</evidence>
<proteinExistence type="evidence at protein level"/>
<comment type="alternative products">
    <event type="alternative splicing"/>
    <isoform>
        <id>Q8BFU3-1</id>
        <name>1</name>
        <sequence type="displayed"/>
    </isoform>
    <isoform>
        <id>Q8BFU3-2</id>
        <name>2</name>
        <sequence type="described" ref="VSP_023774 VSP_023775"/>
    </isoform>
    <isoform>
        <id>Q8BFU3-3</id>
        <name>3</name>
        <sequence type="described" ref="VSP_023773"/>
    </isoform>
    <isoform>
        <id>Q8BFU3-4</id>
        <name>4</name>
        <sequence type="described" ref="VSP_023776"/>
    </isoform>
    <isoform>
        <id>Q8BFU3-5</id>
        <name>5</name>
        <sequence type="described" ref="VSP_023774"/>
    </isoform>
</comment>
<comment type="miscellaneous">
    <molecule>Isoform 3</molecule>
    <text evidence="7">May be produced at very low levels due to a premature stop codon in the mRNA, leading to nonsense-mediated mRNA decay.</text>
</comment>
<comment type="miscellaneous">
    <molecule>Isoform 4</molecule>
    <text evidence="7">May be produced at very low levels due to a premature stop codon in the mRNA, leading to nonsense-mediated mRNA decay.</text>
</comment>
<comment type="sequence caution" evidence="7">
    <conflict type="erroneous initiation">
        <sequence resource="EMBL-CDS" id="AAH49909"/>
    </conflict>
</comment>
<comment type="sequence caution" evidence="7">
    <conflict type="miscellaneous discrepancy">
        <sequence resource="EMBL-CDS" id="BAC28499"/>
    </conflict>
    <text>Intron retention.</text>
</comment>
<comment type="sequence caution" evidence="7">
    <conflict type="erroneous initiation">
        <sequence resource="EMBL-CDS" id="BAC37365"/>
    </conflict>
</comment>
<comment type="sequence caution" evidence="7">
    <conflict type="erroneous initiation">
        <sequence resource="EMBL-CDS" id="BAE22885"/>
    </conflict>
</comment>
<accession>Q8BFU3</accession>
<accession>Q3UWM9</accession>
<accession>Q6P3A7</accession>
<accession>Q80VI8</accession>
<accession>Q8BNZ6</accession>
<accession>Q8CC56</accession>
<accession>Q8CCP2</accession>
<accession>Q8CE92</accession>
<accession>Q8R5B9</accession>